<keyword id="KW-0521">NADP</keyword>
<keyword id="KW-0560">Oxidoreductase</keyword>
<keyword id="KW-0627">Porphyrin biosynthesis</keyword>
<keyword id="KW-1185">Reference proteome</keyword>
<accession>Q0VS78</accession>
<evidence type="ECO:0000255" key="1">
    <source>
        <dbReference type="HAMAP-Rule" id="MF_00087"/>
    </source>
</evidence>
<organism>
    <name type="scientific">Alcanivorax borkumensis (strain ATCC 700651 / DSM 11573 / NCIMB 13689 / SK2)</name>
    <dbReference type="NCBI Taxonomy" id="393595"/>
    <lineage>
        <taxon>Bacteria</taxon>
        <taxon>Pseudomonadati</taxon>
        <taxon>Pseudomonadota</taxon>
        <taxon>Gammaproteobacteria</taxon>
        <taxon>Oceanospirillales</taxon>
        <taxon>Alcanivoracaceae</taxon>
        <taxon>Alcanivorax</taxon>
    </lineage>
</organism>
<gene>
    <name evidence="1" type="primary">hemA</name>
    <name type="ordered locus">ABO_0522</name>
</gene>
<name>HEM1_ALCBS</name>
<comment type="function">
    <text evidence="1">Catalyzes the NADPH-dependent reduction of glutamyl-tRNA(Glu) to glutamate 1-semialdehyde (GSA).</text>
</comment>
<comment type="catalytic activity">
    <reaction evidence="1">
        <text>(S)-4-amino-5-oxopentanoate + tRNA(Glu) + NADP(+) = L-glutamyl-tRNA(Glu) + NADPH + H(+)</text>
        <dbReference type="Rhea" id="RHEA:12344"/>
        <dbReference type="Rhea" id="RHEA-COMP:9663"/>
        <dbReference type="Rhea" id="RHEA-COMP:9680"/>
        <dbReference type="ChEBI" id="CHEBI:15378"/>
        <dbReference type="ChEBI" id="CHEBI:57501"/>
        <dbReference type="ChEBI" id="CHEBI:57783"/>
        <dbReference type="ChEBI" id="CHEBI:58349"/>
        <dbReference type="ChEBI" id="CHEBI:78442"/>
        <dbReference type="ChEBI" id="CHEBI:78520"/>
        <dbReference type="EC" id="1.2.1.70"/>
    </reaction>
</comment>
<comment type="pathway">
    <text evidence="1">Porphyrin-containing compound metabolism; protoporphyrin-IX biosynthesis; 5-aminolevulinate from L-glutamyl-tRNA(Glu): step 1/2.</text>
</comment>
<comment type="subunit">
    <text evidence="1">Homodimer.</text>
</comment>
<comment type="domain">
    <text evidence="1">Possesses an unusual extended V-shaped dimeric structure with each monomer consisting of three distinct domains arranged along a curved 'spinal' alpha-helix. The N-terminal catalytic domain specifically recognizes the glutamate moiety of the substrate. The second domain is the NADPH-binding domain, and the third C-terminal domain is responsible for dimerization.</text>
</comment>
<comment type="miscellaneous">
    <text evidence="1">During catalysis, the active site Cys acts as a nucleophile attacking the alpha-carbonyl group of tRNA-bound glutamate with the formation of a thioester intermediate between enzyme and glutamate, and the concomitant release of tRNA(Glu). The thioester intermediate is finally reduced by direct hydride transfer from NADPH, to form the product GSA.</text>
</comment>
<comment type="similarity">
    <text evidence="1">Belongs to the glutamyl-tRNA reductase family.</text>
</comment>
<dbReference type="EC" id="1.2.1.70" evidence="1"/>
<dbReference type="EMBL" id="AM286690">
    <property type="protein sequence ID" value="CAL15970.1"/>
    <property type="molecule type" value="Genomic_DNA"/>
</dbReference>
<dbReference type="RefSeq" id="WP_011587808.1">
    <property type="nucleotide sequence ID" value="NC_008260.1"/>
</dbReference>
<dbReference type="SMR" id="Q0VS78"/>
<dbReference type="STRING" id="393595.ABO_0522"/>
<dbReference type="KEGG" id="abo:ABO_0522"/>
<dbReference type="eggNOG" id="COG0373">
    <property type="taxonomic scope" value="Bacteria"/>
</dbReference>
<dbReference type="HOGENOM" id="CLU_035113_2_2_6"/>
<dbReference type="OrthoDB" id="110209at2"/>
<dbReference type="UniPathway" id="UPA00251">
    <property type="reaction ID" value="UER00316"/>
</dbReference>
<dbReference type="Proteomes" id="UP000008871">
    <property type="component" value="Chromosome"/>
</dbReference>
<dbReference type="GO" id="GO:0008883">
    <property type="term" value="F:glutamyl-tRNA reductase activity"/>
    <property type="evidence" value="ECO:0007669"/>
    <property type="project" value="UniProtKB-UniRule"/>
</dbReference>
<dbReference type="GO" id="GO:0050661">
    <property type="term" value="F:NADP binding"/>
    <property type="evidence" value="ECO:0007669"/>
    <property type="project" value="InterPro"/>
</dbReference>
<dbReference type="GO" id="GO:0019353">
    <property type="term" value="P:protoporphyrinogen IX biosynthetic process from glutamate"/>
    <property type="evidence" value="ECO:0007669"/>
    <property type="project" value="TreeGrafter"/>
</dbReference>
<dbReference type="CDD" id="cd05213">
    <property type="entry name" value="NAD_bind_Glutamyl_tRNA_reduct"/>
    <property type="match status" value="1"/>
</dbReference>
<dbReference type="FunFam" id="3.30.460.30:FF:000001">
    <property type="entry name" value="Glutamyl-tRNA reductase"/>
    <property type="match status" value="1"/>
</dbReference>
<dbReference type="FunFam" id="3.40.50.720:FF:000031">
    <property type="entry name" value="Glutamyl-tRNA reductase"/>
    <property type="match status" value="1"/>
</dbReference>
<dbReference type="Gene3D" id="3.30.460.30">
    <property type="entry name" value="Glutamyl-tRNA reductase, N-terminal domain"/>
    <property type="match status" value="1"/>
</dbReference>
<dbReference type="Gene3D" id="3.40.50.720">
    <property type="entry name" value="NAD(P)-binding Rossmann-like Domain"/>
    <property type="match status" value="1"/>
</dbReference>
<dbReference type="HAMAP" id="MF_00087">
    <property type="entry name" value="Glu_tRNA_reductase"/>
    <property type="match status" value="1"/>
</dbReference>
<dbReference type="InterPro" id="IPR000343">
    <property type="entry name" value="4pyrrol_synth_GluRdtase"/>
</dbReference>
<dbReference type="InterPro" id="IPR015896">
    <property type="entry name" value="4pyrrol_synth_GluRdtase_dimer"/>
</dbReference>
<dbReference type="InterPro" id="IPR015895">
    <property type="entry name" value="4pyrrol_synth_GluRdtase_N"/>
</dbReference>
<dbReference type="InterPro" id="IPR018214">
    <property type="entry name" value="GluRdtase_CS"/>
</dbReference>
<dbReference type="InterPro" id="IPR036453">
    <property type="entry name" value="GluRdtase_dimer_dom_sf"/>
</dbReference>
<dbReference type="InterPro" id="IPR036343">
    <property type="entry name" value="GluRdtase_N_sf"/>
</dbReference>
<dbReference type="InterPro" id="IPR036291">
    <property type="entry name" value="NAD(P)-bd_dom_sf"/>
</dbReference>
<dbReference type="InterPro" id="IPR006151">
    <property type="entry name" value="Shikm_DH/Glu-tRNA_Rdtase"/>
</dbReference>
<dbReference type="NCBIfam" id="TIGR01035">
    <property type="entry name" value="hemA"/>
    <property type="match status" value="1"/>
</dbReference>
<dbReference type="PANTHER" id="PTHR43013">
    <property type="entry name" value="GLUTAMYL-TRNA REDUCTASE"/>
    <property type="match status" value="1"/>
</dbReference>
<dbReference type="PANTHER" id="PTHR43013:SF1">
    <property type="entry name" value="GLUTAMYL-TRNA REDUCTASE"/>
    <property type="match status" value="1"/>
</dbReference>
<dbReference type="Pfam" id="PF00745">
    <property type="entry name" value="GlutR_dimer"/>
    <property type="match status" value="1"/>
</dbReference>
<dbReference type="Pfam" id="PF05201">
    <property type="entry name" value="GlutR_N"/>
    <property type="match status" value="1"/>
</dbReference>
<dbReference type="Pfam" id="PF01488">
    <property type="entry name" value="Shikimate_DH"/>
    <property type="match status" value="1"/>
</dbReference>
<dbReference type="PIRSF" id="PIRSF000445">
    <property type="entry name" value="4pyrrol_synth_GluRdtase"/>
    <property type="match status" value="1"/>
</dbReference>
<dbReference type="SUPFAM" id="SSF69742">
    <property type="entry name" value="Glutamyl tRNA-reductase catalytic, N-terminal domain"/>
    <property type="match status" value="1"/>
</dbReference>
<dbReference type="SUPFAM" id="SSF69075">
    <property type="entry name" value="Glutamyl tRNA-reductase dimerization domain"/>
    <property type="match status" value="1"/>
</dbReference>
<dbReference type="SUPFAM" id="SSF51735">
    <property type="entry name" value="NAD(P)-binding Rossmann-fold domains"/>
    <property type="match status" value="1"/>
</dbReference>
<dbReference type="PROSITE" id="PS00747">
    <property type="entry name" value="GLUTR"/>
    <property type="match status" value="1"/>
</dbReference>
<reference key="1">
    <citation type="journal article" date="2006" name="Nat. Biotechnol.">
        <title>Genome sequence of the ubiquitous hydrocarbon-degrading marine bacterium Alcanivorax borkumensis.</title>
        <authorList>
            <person name="Schneiker S."/>
            <person name="Martins dos Santos V.A.P."/>
            <person name="Bartels D."/>
            <person name="Bekel T."/>
            <person name="Brecht M."/>
            <person name="Buhrmester J."/>
            <person name="Chernikova T.N."/>
            <person name="Denaro R."/>
            <person name="Ferrer M."/>
            <person name="Gertler C."/>
            <person name="Goesmann A."/>
            <person name="Golyshina O.V."/>
            <person name="Kaminski F."/>
            <person name="Khachane A.N."/>
            <person name="Lang S."/>
            <person name="Linke B."/>
            <person name="McHardy A.C."/>
            <person name="Meyer F."/>
            <person name="Nechitaylo T."/>
            <person name="Puehler A."/>
            <person name="Regenhardt D."/>
            <person name="Rupp O."/>
            <person name="Sabirova J.S."/>
            <person name="Selbitschka W."/>
            <person name="Yakimov M.M."/>
            <person name="Timmis K.N."/>
            <person name="Vorhoelter F.-J."/>
            <person name="Weidner S."/>
            <person name="Kaiser O."/>
            <person name="Golyshin P.N."/>
        </authorList>
    </citation>
    <scope>NUCLEOTIDE SEQUENCE [LARGE SCALE GENOMIC DNA]</scope>
    <source>
        <strain>ATCC 700651 / DSM 11573 / NCIMB 13689 / SK2</strain>
    </source>
</reference>
<feature type="chain" id="PRO_1000004590" description="Glutamyl-tRNA reductase">
    <location>
        <begin position="1"/>
        <end position="418"/>
    </location>
</feature>
<feature type="active site" description="Nucleophile" evidence="1">
    <location>
        <position position="50"/>
    </location>
</feature>
<feature type="binding site" evidence="1">
    <location>
        <begin position="49"/>
        <end position="52"/>
    </location>
    <ligand>
        <name>substrate</name>
    </ligand>
</feature>
<feature type="binding site" evidence="1">
    <location>
        <position position="106"/>
    </location>
    <ligand>
        <name>substrate</name>
    </ligand>
</feature>
<feature type="binding site" evidence="1">
    <location>
        <begin position="111"/>
        <end position="113"/>
    </location>
    <ligand>
        <name>substrate</name>
    </ligand>
</feature>
<feature type="binding site" evidence="1">
    <location>
        <position position="117"/>
    </location>
    <ligand>
        <name>substrate</name>
    </ligand>
</feature>
<feature type="binding site" evidence="1">
    <location>
        <begin position="186"/>
        <end position="191"/>
    </location>
    <ligand>
        <name>NADP(+)</name>
        <dbReference type="ChEBI" id="CHEBI:58349"/>
    </ligand>
</feature>
<feature type="site" description="Important for activity" evidence="1">
    <location>
        <position position="96"/>
    </location>
</feature>
<proteinExistence type="inferred from homology"/>
<sequence>MNLVAVGVNHTTADVELRERLAFSTQQAEVALASLREMPGVREAALLSTCNRTELYCLTDDVTPNFAQWLASSRNLSVERLSTVLYQHTGEQALEHMMRVAGGLDSLVLGEPQILGQMREAYARAHEAGLLNGELSRLFQEVFSVAKRIRTETGIGANPVSVAYAAVSFARHIFADLKKSRALLIGAGEMIELVARHLSEQQVQEITIANRTQERASELAAAVGGRGISLEELPVALERADILISCTAAPLPIMGKGMVERALKKRRHRPMFMVDIAVPRDIEPEVGELGDVYLYTVDHLQEAIQENVRSRQQAAQEASELIRDAIVRHRRQRREQDAVKVLRDYREQRKAMAESELEKALQQLRNGGDAEQVLRRFQHSLVNKWLHSPSVTLRKMAADGRAEALLLARELLLDDDQS</sequence>
<protein>
    <recommendedName>
        <fullName evidence="1">Glutamyl-tRNA reductase</fullName>
        <shortName evidence="1">GluTR</shortName>
        <ecNumber evidence="1">1.2.1.70</ecNumber>
    </recommendedName>
</protein>